<evidence type="ECO:0000255" key="1">
    <source>
        <dbReference type="PROSITE-ProRule" id="PRU00472"/>
    </source>
</evidence>
<evidence type="ECO:0000255" key="2">
    <source>
        <dbReference type="PROSITE-ProRule" id="PRU00649"/>
    </source>
</evidence>
<evidence type="ECO:0000255" key="3">
    <source>
        <dbReference type="PROSITE-ProRule" id="PRU00651"/>
    </source>
</evidence>
<evidence type="ECO:0000256" key="4">
    <source>
        <dbReference type="SAM" id="MobiDB-lite"/>
    </source>
</evidence>
<evidence type="ECO:0000305" key="5"/>
<proteinExistence type="evidence at transcript level"/>
<comment type="function">
    <text>Necessary for efficient RNA polymerase II transcription elongation past template-encoded arresting sites. The arresting sites in DNA have the property of trapping a certain fraction of elongating RNA polymerases that pass through, resulting in locked ternary complexes. Cleavage of the nascent transcript by S-II allows the resumption of elongation from the new 3'-terminus.</text>
</comment>
<comment type="subcellular location">
    <subcellularLocation>
        <location>Nucleus</location>
    </subcellularLocation>
</comment>
<comment type="miscellaneous">
    <text>S-II binds to RNA-polymerase II in the absence of transcription.</text>
</comment>
<comment type="similarity">
    <text evidence="5">Belongs to the TFS-II family.</text>
</comment>
<accession>P20232</accession>
<accession>Q9V3M8</accession>
<reference key="1">
    <citation type="journal article" date="1990" name="Nucleic Acids Res.">
        <title>Drosophila RNA polymerase II elongation factor DmS-II has homology to mouse S-II and sequence similarity to yeast PPR2.</title>
        <authorList>
            <person name="Marshall T.K."/>
            <person name="Guo H."/>
            <person name="Price D.H."/>
        </authorList>
    </citation>
    <scope>NUCLEOTIDE SEQUENCE [MRNA]</scope>
</reference>
<reference key="2">
    <citation type="journal article" date="1995" name="Biochim. Biophys. Acta">
        <title>Isolation and characterization of the gene encoding the Drosophila melanogaster transcriptional elongation factor, TFIIS.</title>
        <authorList>
            <person name="Oh Y."/>
            <person name="Yoon J."/>
            <person name="Baek K."/>
        </authorList>
    </citation>
    <scope>NUCLEOTIDE SEQUENCE [GENOMIC DNA]</scope>
</reference>
<reference key="3">
    <citation type="journal article" date="1999" name="Genetics">
        <title>An exploration of the sequence of a 2.9-Mb region of the genome of Drosophila melanogaster: the Adh region.</title>
        <authorList>
            <person name="Ashburner M."/>
            <person name="Misra S."/>
            <person name="Roote J."/>
            <person name="Lewis S.E."/>
            <person name="Blazej R.G."/>
            <person name="Davis T."/>
            <person name="Doyle C."/>
            <person name="Galle R.F."/>
            <person name="George R.A."/>
            <person name="Harris N.L."/>
            <person name="Hartzell G."/>
            <person name="Harvey D.A."/>
            <person name="Hong L."/>
            <person name="Houston K.A."/>
            <person name="Hoskins R.A."/>
            <person name="Johnson G."/>
            <person name="Martin C."/>
            <person name="Moshrefi A.R."/>
            <person name="Palazzolo M."/>
            <person name="Reese M.G."/>
            <person name="Spradling A.C."/>
            <person name="Tsang G."/>
            <person name="Wan K.H."/>
            <person name="Whitelaw K."/>
            <person name="Celniker S.E."/>
            <person name="Rubin G.M."/>
        </authorList>
    </citation>
    <scope>NUCLEOTIDE SEQUENCE [LARGE SCALE GENOMIC DNA]</scope>
    <source>
        <strain>Berkeley</strain>
    </source>
</reference>
<reference key="4">
    <citation type="journal article" date="2000" name="Science">
        <title>The genome sequence of Drosophila melanogaster.</title>
        <authorList>
            <person name="Adams M.D."/>
            <person name="Celniker S.E."/>
            <person name="Holt R.A."/>
            <person name="Evans C.A."/>
            <person name="Gocayne J.D."/>
            <person name="Amanatides P.G."/>
            <person name="Scherer S.E."/>
            <person name="Li P.W."/>
            <person name="Hoskins R.A."/>
            <person name="Galle R.F."/>
            <person name="George R.A."/>
            <person name="Lewis S.E."/>
            <person name="Richards S."/>
            <person name="Ashburner M."/>
            <person name="Henderson S.N."/>
            <person name="Sutton G.G."/>
            <person name="Wortman J.R."/>
            <person name="Yandell M.D."/>
            <person name="Zhang Q."/>
            <person name="Chen L.X."/>
            <person name="Brandon R.C."/>
            <person name="Rogers Y.-H.C."/>
            <person name="Blazej R.G."/>
            <person name="Champe M."/>
            <person name="Pfeiffer B.D."/>
            <person name="Wan K.H."/>
            <person name="Doyle C."/>
            <person name="Baxter E.G."/>
            <person name="Helt G."/>
            <person name="Nelson C.R."/>
            <person name="Miklos G.L.G."/>
            <person name="Abril J.F."/>
            <person name="Agbayani A."/>
            <person name="An H.-J."/>
            <person name="Andrews-Pfannkoch C."/>
            <person name="Baldwin D."/>
            <person name="Ballew R.M."/>
            <person name="Basu A."/>
            <person name="Baxendale J."/>
            <person name="Bayraktaroglu L."/>
            <person name="Beasley E.M."/>
            <person name="Beeson K.Y."/>
            <person name="Benos P.V."/>
            <person name="Berman B.P."/>
            <person name="Bhandari D."/>
            <person name="Bolshakov S."/>
            <person name="Borkova D."/>
            <person name="Botchan M.R."/>
            <person name="Bouck J."/>
            <person name="Brokstein P."/>
            <person name="Brottier P."/>
            <person name="Burtis K.C."/>
            <person name="Busam D.A."/>
            <person name="Butler H."/>
            <person name="Cadieu E."/>
            <person name="Center A."/>
            <person name="Chandra I."/>
            <person name="Cherry J.M."/>
            <person name="Cawley S."/>
            <person name="Dahlke C."/>
            <person name="Davenport L.B."/>
            <person name="Davies P."/>
            <person name="de Pablos B."/>
            <person name="Delcher A."/>
            <person name="Deng Z."/>
            <person name="Mays A.D."/>
            <person name="Dew I."/>
            <person name="Dietz S.M."/>
            <person name="Dodson K."/>
            <person name="Doup L.E."/>
            <person name="Downes M."/>
            <person name="Dugan-Rocha S."/>
            <person name="Dunkov B.C."/>
            <person name="Dunn P."/>
            <person name="Durbin K.J."/>
            <person name="Evangelista C.C."/>
            <person name="Ferraz C."/>
            <person name="Ferriera S."/>
            <person name="Fleischmann W."/>
            <person name="Fosler C."/>
            <person name="Gabrielian A.E."/>
            <person name="Garg N.S."/>
            <person name="Gelbart W.M."/>
            <person name="Glasser K."/>
            <person name="Glodek A."/>
            <person name="Gong F."/>
            <person name="Gorrell J.H."/>
            <person name="Gu Z."/>
            <person name="Guan P."/>
            <person name="Harris M."/>
            <person name="Harris N.L."/>
            <person name="Harvey D.A."/>
            <person name="Heiman T.J."/>
            <person name="Hernandez J.R."/>
            <person name="Houck J."/>
            <person name="Hostin D."/>
            <person name="Houston K.A."/>
            <person name="Howland T.J."/>
            <person name="Wei M.-H."/>
            <person name="Ibegwam C."/>
            <person name="Jalali M."/>
            <person name="Kalush F."/>
            <person name="Karpen G.H."/>
            <person name="Ke Z."/>
            <person name="Kennison J.A."/>
            <person name="Ketchum K.A."/>
            <person name="Kimmel B.E."/>
            <person name="Kodira C.D."/>
            <person name="Kraft C.L."/>
            <person name="Kravitz S."/>
            <person name="Kulp D."/>
            <person name="Lai Z."/>
            <person name="Lasko P."/>
            <person name="Lei Y."/>
            <person name="Levitsky A.A."/>
            <person name="Li J.H."/>
            <person name="Li Z."/>
            <person name="Liang Y."/>
            <person name="Lin X."/>
            <person name="Liu X."/>
            <person name="Mattei B."/>
            <person name="McIntosh T.C."/>
            <person name="McLeod M.P."/>
            <person name="McPherson D."/>
            <person name="Merkulov G."/>
            <person name="Milshina N.V."/>
            <person name="Mobarry C."/>
            <person name="Morris J."/>
            <person name="Moshrefi A."/>
            <person name="Mount S.M."/>
            <person name="Moy M."/>
            <person name="Murphy B."/>
            <person name="Murphy L."/>
            <person name="Muzny D.M."/>
            <person name="Nelson D.L."/>
            <person name="Nelson D.R."/>
            <person name="Nelson K.A."/>
            <person name="Nixon K."/>
            <person name="Nusskern D.R."/>
            <person name="Pacleb J.M."/>
            <person name="Palazzolo M."/>
            <person name="Pittman G.S."/>
            <person name="Pan S."/>
            <person name="Pollard J."/>
            <person name="Puri V."/>
            <person name="Reese M.G."/>
            <person name="Reinert K."/>
            <person name="Remington K."/>
            <person name="Saunders R.D.C."/>
            <person name="Scheeler F."/>
            <person name="Shen H."/>
            <person name="Shue B.C."/>
            <person name="Siden-Kiamos I."/>
            <person name="Simpson M."/>
            <person name="Skupski M.P."/>
            <person name="Smith T.J."/>
            <person name="Spier E."/>
            <person name="Spradling A.C."/>
            <person name="Stapleton M."/>
            <person name="Strong R."/>
            <person name="Sun E."/>
            <person name="Svirskas R."/>
            <person name="Tector C."/>
            <person name="Turner R."/>
            <person name="Venter E."/>
            <person name="Wang A.H."/>
            <person name="Wang X."/>
            <person name="Wang Z.-Y."/>
            <person name="Wassarman D.A."/>
            <person name="Weinstock G.M."/>
            <person name="Weissenbach J."/>
            <person name="Williams S.M."/>
            <person name="Woodage T."/>
            <person name="Worley K.C."/>
            <person name="Wu D."/>
            <person name="Yang S."/>
            <person name="Yao Q.A."/>
            <person name="Ye J."/>
            <person name="Yeh R.-F."/>
            <person name="Zaveri J.S."/>
            <person name="Zhan M."/>
            <person name="Zhang G."/>
            <person name="Zhao Q."/>
            <person name="Zheng L."/>
            <person name="Zheng X.H."/>
            <person name="Zhong F.N."/>
            <person name="Zhong W."/>
            <person name="Zhou X."/>
            <person name="Zhu S.C."/>
            <person name="Zhu X."/>
            <person name="Smith H.O."/>
            <person name="Gibbs R.A."/>
            <person name="Myers E.W."/>
            <person name="Rubin G.M."/>
            <person name="Venter J.C."/>
        </authorList>
    </citation>
    <scope>NUCLEOTIDE SEQUENCE [LARGE SCALE GENOMIC DNA]</scope>
    <source>
        <strain>Berkeley</strain>
    </source>
</reference>
<reference key="5">
    <citation type="journal article" date="2002" name="Genome Biol.">
        <title>Annotation of the Drosophila melanogaster euchromatic genome: a systematic review.</title>
        <authorList>
            <person name="Misra S."/>
            <person name="Crosby M.A."/>
            <person name="Mungall C.J."/>
            <person name="Matthews B.B."/>
            <person name="Campbell K.S."/>
            <person name="Hradecky P."/>
            <person name="Huang Y."/>
            <person name="Kaminker J.S."/>
            <person name="Millburn G.H."/>
            <person name="Prochnik S.E."/>
            <person name="Smith C.D."/>
            <person name="Tupy J.L."/>
            <person name="Whitfield E.J."/>
            <person name="Bayraktaroglu L."/>
            <person name="Berman B.P."/>
            <person name="Bettencourt B.R."/>
            <person name="Celniker S.E."/>
            <person name="de Grey A.D.N.J."/>
            <person name="Drysdale R.A."/>
            <person name="Harris N.L."/>
            <person name="Richter J."/>
            <person name="Russo S."/>
            <person name="Schroeder A.J."/>
            <person name="Shu S.Q."/>
            <person name="Stapleton M."/>
            <person name="Yamada C."/>
            <person name="Ashburner M."/>
            <person name="Gelbart W.M."/>
            <person name="Rubin G.M."/>
            <person name="Lewis S.E."/>
        </authorList>
    </citation>
    <scope>GENOME REANNOTATION</scope>
    <source>
        <strain>Berkeley</strain>
    </source>
</reference>
<reference key="6">
    <citation type="journal article" date="2002" name="Genome Biol.">
        <title>A Drosophila full-length cDNA resource.</title>
        <authorList>
            <person name="Stapleton M."/>
            <person name="Carlson J.W."/>
            <person name="Brokstein P."/>
            <person name="Yu C."/>
            <person name="Champe M."/>
            <person name="George R.A."/>
            <person name="Guarin H."/>
            <person name="Kronmiller B."/>
            <person name="Pacleb J.M."/>
            <person name="Park S."/>
            <person name="Wan K.H."/>
            <person name="Rubin G.M."/>
            <person name="Celniker S.E."/>
        </authorList>
    </citation>
    <scope>NUCLEOTIDE SEQUENCE [LARGE SCALE MRNA]</scope>
    <source>
        <strain>Berkeley</strain>
        <tissue>Embryo</tissue>
    </source>
</reference>
<keyword id="KW-0238">DNA-binding</keyword>
<keyword id="KW-0479">Metal-binding</keyword>
<keyword id="KW-0539">Nucleus</keyword>
<keyword id="KW-1185">Reference proteome</keyword>
<keyword id="KW-0804">Transcription</keyword>
<keyword id="KW-0805">Transcription regulation</keyword>
<keyword id="KW-0862">Zinc</keyword>
<keyword id="KW-0863">Zinc-finger</keyword>
<organism>
    <name type="scientific">Drosophila melanogaster</name>
    <name type="common">Fruit fly</name>
    <dbReference type="NCBI Taxonomy" id="7227"/>
    <lineage>
        <taxon>Eukaryota</taxon>
        <taxon>Metazoa</taxon>
        <taxon>Ecdysozoa</taxon>
        <taxon>Arthropoda</taxon>
        <taxon>Hexapoda</taxon>
        <taxon>Insecta</taxon>
        <taxon>Pterygota</taxon>
        <taxon>Neoptera</taxon>
        <taxon>Endopterygota</taxon>
        <taxon>Diptera</taxon>
        <taxon>Brachycera</taxon>
        <taxon>Muscomorpha</taxon>
        <taxon>Ephydroidea</taxon>
        <taxon>Drosophilidae</taxon>
        <taxon>Drosophila</taxon>
        <taxon>Sophophora</taxon>
    </lineage>
</organism>
<gene>
    <name type="primary">TfIIS</name>
    <name type="synonym">DmSII</name>
    <name type="ORF">CG3710</name>
</gene>
<dbReference type="EMBL" id="X53670">
    <property type="protein sequence ID" value="CAA37710.1"/>
    <property type="molecule type" value="mRNA"/>
</dbReference>
<dbReference type="EMBL" id="L26091">
    <property type="protein sequence ID" value="AAA92864.2"/>
    <property type="status" value="ALT_SEQ"/>
    <property type="molecule type" value="Genomic_DNA"/>
</dbReference>
<dbReference type="EMBL" id="AE014134">
    <property type="protein sequence ID" value="AAF53436.1"/>
    <property type="molecule type" value="Genomic_DNA"/>
</dbReference>
<dbReference type="EMBL" id="AY051843">
    <property type="protein sequence ID" value="AAK93267.1"/>
    <property type="molecule type" value="mRNA"/>
</dbReference>
<dbReference type="PIR" id="S55899">
    <property type="entry name" value="S55899"/>
</dbReference>
<dbReference type="RefSeq" id="NP_001260457.1">
    <property type="nucleotide sequence ID" value="NM_001273528.1"/>
</dbReference>
<dbReference type="RefSeq" id="NP_476967.1">
    <property type="nucleotide sequence ID" value="NM_057619.4"/>
</dbReference>
<dbReference type="SMR" id="P20232"/>
<dbReference type="BioGRID" id="60901">
    <property type="interactions" value="5"/>
</dbReference>
<dbReference type="DIP" id="DIP-23586N"/>
<dbReference type="FunCoup" id="P20232">
    <property type="interactions" value="2442"/>
</dbReference>
<dbReference type="IntAct" id="P20232">
    <property type="interactions" value="8"/>
</dbReference>
<dbReference type="STRING" id="7227.FBpp0304751"/>
<dbReference type="PaxDb" id="7227-FBpp0304751"/>
<dbReference type="DNASU" id="34883"/>
<dbReference type="EnsemblMetazoa" id="FBtr0080722">
    <property type="protein sequence ID" value="FBpp0080281"/>
    <property type="gene ID" value="FBgn0010422"/>
</dbReference>
<dbReference type="EnsemblMetazoa" id="FBtr0332475">
    <property type="protein sequence ID" value="FBpp0304751"/>
    <property type="gene ID" value="FBgn0010422"/>
</dbReference>
<dbReference type="GeneID" id="34883"/>
<dbReference type="KEGG" id="dme:Dmel_CG3710"/>
<dbReference type="AGR" id="FB:FBgn0010422"/>
<dbReference type="CTD" id="34883"/>
<dbReference type="FlyBase" id="FBgn0010422">
    <property type="gene designation" value="TfIIS"/>
</dbReference>
<dbReference type="VEuPathDB" id="VectorBase:FBgn0010422"/>
<dbReference type="eggNOG" id="KOG1105">
    <property type="taxonomic scope" value="Eukaryota"/>
</dbReference>
<dbReference type="GeneTree" id="ENSGT00940000168073"/>
<dbReference type="HOGENOM" id="CLU_037637_2_0_1"/>
<dbReference type="InParanoid" id="P20232"/>
<dbReference type="OMA" id="DACDPFR"/>
<dbReference type="OrthoDB" id="44867at2759"/>
<dbReference type="PhylomeDB" id="P20232"/>
<dbReference type="Reactome" id="R-DME-112382">
    <property type="pathway name" value="Formation of RNA Pol II elongation complex"/>
</dbReference>
<dbReference type="Reactome" id="R-DME-674695">
    <property type="pathway name" value="RNA Polymerase II Pre-transcription Events"/>
</dbReference>
<dbReference type="Reactome" id="R-DME-6781823">
    <property type="pathway name" value="Formation of TC-NER Pre-Incision Complex"/>
</dbReference>
<dbReference type="Reactome" id="R-DME-6782135">
    <property type="pathway name" value="Dual incision in TC-NER"/>
</dbReference>
<dbReference type="Reactome" id="R-DME-6782210">
    <property type="pathway name" value="Gap-filling DNA repair synthesis and ligation in TC-NER"/>
</dbReference>
<dbReference type="Reactome" id="R-DME-6796648">
    <property type="pathway name" value="TP53 Regulates Transcription of DNA Repair Genes"/>
</dbReference>
<dbReference type="Reactome" id="R-DME-75955">
    <property type="pathway name" value="RNA Polymerase II Transcription Elongation"/>
</dbReference>
<dbReference type="BioGRID-ORCS" id="34883">
    <property type="hits" value="1 hit in 3 CRISPR screens"/>
</dbReference>
<dbReference type="GenomeRNAi" id="34883"/>
<dbReference type="PRO" id="PR:P20232"/>
<dbReference type="Proteomes" id="UP000000803">
    <property type="component" value="Chromosome 2L"/>
</dbReference>
<dbReference type="Bgee" id="FBgn0010422">
    <property type="expression patterns" value="Expressed in T neuron T5c (Drosophila) in embryonic/larval optic lobe (Drosophila) and 134 other cell types or tissues"/>
</dbReference>
<dbReference type="ExpressionAtlas" id="P20232">
    <property type="expression patterns" value="baseline and differential"/>
</dbReference>
<dbReference type="GO" id="GO:0005634">
    <property type="term" value="C:nucleus"/>
    <property type="evidence" value="ECO:0000250"/>
    <property type="project" value="FlyBase"/>
</dbReference>
<dbReference type="GO" id="GO:0003677">
    <property type="term" value="F:DNA binding"/>
    <property type="evidence" value="ECO:0007669"/>
    <property type="project" value="UniProtKB-KW"/>
</dbReference>
<dbReference type="GO" id="GO:0008270">
    <property type="term" value="F:zinc ion binding"/>
    <property type="evidence" value="ECO:0007669"/>
    <property type="project" value="UniProtKB-KW"/>
</dbReference>
<dbReference type="GO" id="GO:0006357">
    <property type="term" value="P:regulation of transcription by RNA polymerase II"/>
    <property type="evidence" value="ECO:0000318"/>
    <property type="project" value="GO_Central"/>
</dbReference>
<dbReference type="GO" id="GO:0006368">
    <property type="term" value="P:transcription elongation by RNA polymerase II"/>
    <property type="evidence" value="ECO:0000250"/>
    <property type="project" value="FlyBase"/>
</dbReference>
<dbReference type="CDD" id="cd00183">
    <property type="entry name" value="TFIIS_I"/>
    <property type="match status" value="1"/>
</dbReference>
<dbReference type="CDD" id="cd13749">
    <property type="entry name" value="Zn-ribbon_TFIIS"/>
    <property type="match status" value="1"/>
</dbReference>
<dbReference type="FunFam" id="2.20.25.10:FF:000001">
    <property type="entry name" value="Probable Transcription elongation factor S-II"/>
    <property type="match status" value="1"/>
</dbReference>
<dbReference type="FunFam" id="1.20.930.10:FF:000020">
    <property type="entry name" value="Transcription elongation factor A (SII), 3"/>
    <property type="match status" value="1"/>
</dbReference>
<dbReference type="FunFam" id="1.10.472.30:FF:000008">
    <property type="entry name" value="transcription elongation factor S-II"/>
    <property type="match status" value="1"/>
</dbReference>
<dbReference type="Gene3D" id="2.20.25.10">
    <property type="match status" value="1"/>
</dbReference>
<dbReference type="Gene3D" id="1.20.930.10">
    <property type="entry name" value="Conserved domain common to transcription factors TFIIS, elongin A, CRSP70"/>
    <property type="match status" value="1"/>
</dbReference>
<dbReference type="Gene3D" id="1.10.472.30">
    <property type="entry name" value="Transcription elongation factor S-II, central domain"/>
    <property type="match status" value="1"/>
</dbReference>
<dbReference type="InterPro" id="IPR035100">
    <property type="entry name" value="TF_IIS-typ"/>
</dbReference>
<dbReference type="InterPro" id="IPR003617">
    <property type="entry name" value="TFIIS/CRSP70_N_sub"/>
</dbReference>
<dbReference type="InterPro" id="IPR035441">
    <property type="entry name" value="TFIIS/LEDGF_dom_sf"/>
</dbReference>
<dbReference type="InterPro" id="IPR003618">
    <property type="entry name" value="TFIIS_cen_dom"/>
</dbReference>
<dbReference type="InterPro" id="IPR036575">
    <property type="entry name" value="TFIIS_cen_dom_sf"/>
</dbReference>
<dbReference type="InterPro" id="IPR017923">
    <property type="entry name" value="TFIIS_N"/>
</dbReference>
<dbReference type="InterPro" id="IPR006289">
    <property type="entry name" value="TFSII"/>
</dbReference>
<dbReference type="InterPro" id="IPR001222">
    <property type="entry name" value="Znf_TFIIS"/>
</dbReference>
<dbReference type="NCBIfam" id="TIGR01385">
    <property type="entry name" value="TFSII"/>
    <property type="match status" value="1"/>
</dbReference>
<dbReference type="PANTHER" id="PTHR11477:SF0">
    <property type="entry name" value="IP08861P-RELATED"/>
    <property type="match status" value="1"/>
</dbReference>
<dbReference type="PANTHER" id="PTHR11477">
    <property type="entry name" value="TRANSCRIPTION FACTOR S-II ZINC FINGER DOMAIN-CONTAINING PROTEIN"/>
    <property type="match status" value="1"/>
</dbReference>
<dbReference type="Pfam" id="PF08711">
    <property type="entry name" value="Med26"/>
    <property type="match status" value="1"/>
</dbReference>
<dbReference type="Pfam" id="PF07500">
    <property type="entry name" value="TFIIS_M"/>
    <property type="match status" value="1"/>
</dbReference>
<dbReference type="Pfam" id="PF01096">
    <property type="entry name" value="Zn_ribbon_TFIIS"/>
    <property type="match status" value="1"/>
</dbReference>
<dbReference type="PIRSF" id="PIRSF006704">
    <property type="entry name" value="TF_IIS"/>
    <property type="match status" value="1"/>
</dbReference>
<dbReference type="SMART" id="SM00510">
    <property type="entry name" value="TFS2M"/>
    <property type="match status" value="1"/>
</dbReference>
<dbReference type="SMART" id="SM00509">
    <property type="entry name" value="TFS2N"/>
    <property type="match status" value="1"/>
</dbReference>
<dbReference type="SMART" id="SM00440">
    <property type="entry name" value="ZnF_C2C2"/>
    <property type="match status" value="1"/>
</dbReference>
<dbReference type="SUPFAM" id="SSF47676">
    <property type="entry name" value="Conserved domain common to transcription factors TFIIS, elongin A, CRSP70"/>
    <property type="match status" value="1"/>
</dbReference>
<dbReference type="SUPFAM" id="SSF46942">
    <property type="entry name" value="Elongation factor TFIIS domain 2"/>
    <property type="match status" value="1"/>
</dbReference>
<dbReference type="SUPFAM" id="SSF57783">
    <property type="entry name" value="Zinc beta-ribbon"/>
    <property type="match status" value="1"/>
</dbReference>
<dbReference type="PROSITE" id="PS51321">
    <property type="entry name" value="TFIIS_CENTRAL"/>
    <property type="match status" value="1"/>
</dbReference>
<dbReference type="PROSITE" id="PS51319">
    <property type="entry name" value="TFIIS_N"/>
    <property type="match status" value="1"/>
</dbReference>
<dbReference type="PROSITE" id="PS00466">
    <property type="entry name" value="ZF_TFIIS_1"/>
    <property type="match status" value="1"/>
</dbReference>
<dbReference type="PROSITE" id="PS51133">
    <property type="entry name" value="ZF_TFIIS_2"/>
    <property type="match status" value="1"/>
</dbReference>
<protein>
    <recommendedName>
        <fullName>Transcription elongation factor S-II</fullName>
    </recommendedName>
    <alternativeName>
        <fullName>RNA polymerase II elongation factor DMS-II</fullName>
    </alternativeName>
    <alternativeName>
        <fullName>TFIIS</fullName>
    </alternativeName>
</protein>
<feature type="chain" id="PRO_0000121445" description="Transcription elongation factor S-II">
    <location>
        <begin position="1"/>
        <end position="313"/>
    </location>
</feature>
<feature type="domain" description="TFIIS N-terminal" evidence="2">
    <location>
        <begin position="5"/>
        <end position="83"/>
    </location>
</feature>
<feature type="domain" description="TFIIS central" evidence="3">
    <location>
        <begin position="153"/>
        <end position="268"/>
    </location>
</feature>
<feature type="zinc finger region" description="TFIIS-type" evidence="1">
    <location>
        <begin position="271"/>
        <end position="311"/>
    </location>
</feature>
<feature type="region of interest" description="Disordered" evidence="4">
    <location>
        <begin position="83"/>
        <end position="150"/>
    </location>
</feature>
<feature type="compositionally biased region" description="Low complexity" evidence="4">
    <location>
        <begin position="91"/>
        <end position="117"/>
    </location>
</feature>
<feature type="compositionally biased region" description="Basic and acidic residues" evidence="4">
    <location>
        <begin position="118"/>
        <end position="135"/>
    </location>
</feature>
<feature type="compositionally biased region" description="Low complexity" evidence="4">
    <location>
        <begin position="136"/>
        <end position="148"/>
    </location>
</feature>
<feature type="binding site" evidence="1">
    <location>
        <position position="275"/>
    </location>
    <ligand>
        <name>Zn(2+)</name>
        <dbReference type="ChEBI" id="CHEBI:29105"/>
    </ligand>
</feature>
<feature type="binding site" evidence="1">
    <location>
        <position position="278"/>
    </location>
    <ligand>
        <name>Zn(2+)</name>
        <dbReference type="ChEBI" id="CHEBI:29105"/>
    </ligand>
</feature>
<feature type="binding site" evidence="1">
    <location>
        <position position="303"/>
    </location>
    <ligand>
        <name>Zn(2+)</name>
        <dbReference type="ChEBI" id="CHEBI:29105"/>
    </ligand>
</feature>
<feature type="binding site" evidence="1">
    <location>
        <position position="306"/>
    </location>
    <ligand>
        <name>Zn(2+)</name>
        <dbReference type="ChEBI" id="CHEBI:29105"/>
    </ligand>
</feature>
<name>TFS2_DROME</name>
<sequence length="313" mass="34300">MSVEEEVFRIQKKMSKMASDGTGQDQALDLLKALQTLNINLDILTKTRIGMTVNELRKSSKDDEVIALAKTLIKNWKRFLASPAPTTPNNSSAKEGSSNNSSASKSTSAAKSSSSISGKDKSSSSSSSKDKEKKGSTSSSQTSFPSGGMTDAVRIKCREMLATALKIGEVPEGCGEPEEMAAELEDAIYSEFNNTDMKYKNRIRSRVANLKDPKNPGLRGNFMCGAVTAKQLAKMTPEEMASDEMKKLREKFVKEAINDAQLATVQGTKTDLLKCAKCKKRNCTYNQLQTRSADEPMTTFVMCNECGNRWKFC</sequence>